<gene>
    <name evidence="1" type="primary">glmS</name>
    <name type="ordered locus">aq_301</name>
</gene>
<organism>
    <name type="scientific">Aquifex aeolicus (strain VF5)</name>
    <dbReference type="NCBI Taxonomy" id="224324"/>
    <lineage>
        <taxon>Bacteria</taxon>
        <taxon>Pseudomonadati</taxon>
        <taxon>Aquificota</taxon>
        <taxon>Aquificia</taxon>
        <taxon>Aquificales</taxon>
        <taxon>Aquificaceae</taxon>
        <taxon>Aquifex</taxon>
    </lineage>
</organism>
<accession>O66648</accession>
<dbReference type="EC" id="2.6.1.16" evidence="1"/>
<dbReference type="EMBL" id="AE000657">
    <property type="protein sequence ID" value="AAC06609.1"/>
    <property type="molecule type" value="Genomic_DNA"/>
</dbReference>
<dbReference type="PIR" id="D70327">
    <property type="entry name" value="D70327"/>
</dbReference>
<dbReference type="RefSeq" id="NP_213208.1">
    <property type="nucleotide sequence ID" value="NC_000918.1"/>
</dbReference>
<dbReference type="RefSeq" id="WP_010880146.1">
    <property type="nucleotide sequence ID" value="NC_000918.1"/>
</dbReference>
<dbReference type="SMR" id="O66648"/>
<dbReference type="FunCoup" id="O66648">
    <property type="interactions" value="371"/>
</dbReference>
<dbReference type="STRING" id="224324.aq_301"/>
<dbReference type="EnsemblBacteria" id="AAC06609">
    <property type="protein sequence ID" value="AAC06609"/>
    <property type="gene ID" value="aq_301"/>
</dbReference>
<dbReference type="KEGG" id="aae:aq_301"/>
<dbReference type="PATRIC" id="fig|224324.8.peg.246"/>
<dbReference type="eggNOG" id="COG0449">
    <property type="taxonomic scope" value="Bacteria"/>
</dbReference>
<dbReference type="HOGENOM" id="CLU_012520_5_2_0"/>
<dbReference type="InParanoid" id="O66648"/>
<dbReference type="OrthoDB" id="106547at2"/>
<dbReference type="Proteomes" id="UP000000798">
    <property type="component" value="Chromosome"/>
</dbReference>
<dbReference type="GO" id="GO:0005829">
    <property type="term" value="C:cytosol"/>
    <property type="evidence" value="ECO:0000318"/>
    <property type="project" value="GO_Central"/>
</dbReference>
<dbReference type="GO" id="GO:0097367">
    <property type="term" value="F:carbohydrate derivative binding"/>
    <property type="evidence" value="ECO:0007669"/>
    <property type="project" value="InterPro"/>
</dbReference>
<dbReference type="GO" id="GO:0004360">
    <property type="term" value="F:glutamine-fructose-6-phosphate transaminase (isomerizing) activity"/>
    <property type="evidence" value="ECO:0000318"/>
    <property type="project" value="GO_Central"/>
</dbReference>
<dbReference type="GO" id="GO:0005975">
    <property type="term" value="P:carbohydrate metabolic process"/>
    <property type="evidence" value="ECO:0007669"/>
    <property type="project" value="UniProtKB-UniRule"/>
</dbReference>
<dbReference type="GO" id="GO:0006002">
    <property type="term" value="P:fructose 6-phosphate metabolic process"/>
    <property type="evidence" value="ECO:0000318"/>
    <property type="project" value="GO_Central"/>
</dbReference>
<dbReference type="GO" id="GO:0006487">
    <property type="term" value="P:protein N-linked glycosylation"/>
    <property type="evidence" value="ECO:0000318"/>
    <property type="project" value="GO_Central"/>
</dbReference>
<dbReference type="GO" id="GO:0006047">
    <property type="term" value="P:UDP-N-acetylglucosamine metabolic process"/>
    <property type="evidence" value="ECO:0000318"/>
    <property type="project" value="GO_Central"/>
</dbReference>
<dbReference type="CDD" id="cd00714">
    <property type="entry name" value="GFAT"/>
    <property type="match status" value="1"/>
</dbReference>
<dbReference type="CDD" id="cd05008">
    <property type="entry name" value="SIS_GlmS_GlmD_1"/>
    <property type="match status" value="1"/>
</dbReference>
<dbReference type="CDD" id="cd05009">
    <property type="entry name" value="SIS_GlmS_GlmD_2"/>
    <property type="match status" value="1"/>
</dbReference>
<dbReference type="FunFam" id="3.40.50.10490:FF:000001">
    <property type="entry name" value="Glutamine--fructose-6-phosphate aminotransferase [isomerizing]"/>
    <property type="match status" value="1"/>
</dbReference>
<dbReference type="FunFam" id="3.60.20.10:FF:000006">
    <property type="entry name" value="Glutamine--fructose-6-phosphate aminotransferase [isomerizing]"/>
    <property type="match status" value="1"/>
</dbReference>
<dbReference type="Gene3D" id="3.40.50.10490">
    <property type="entry name" value="Glucose-6-phosphate isomerase like protein, domain 1"/>
    <property type="match status" value="2"/>
</dbReference>
<dbReference type="Gene3D" id="3.60.20.10">
    <property type="entry name" value="Glutamine Phosphoribosylpyrophosphate, subunit 1, domain 1"/>
    <property type="match status" value="1"/>
</dbReference>
<dbReference type="HAMAP" id="MF_00164">
    <property type="entry name" value="GlmS"/>
    <property type="match status" value="1"/>
</dbReference>
<dbReference type="InterPro" id="IPR017932">
    <property type="entry name" value="GATase_2_dom"/>
</dbReference>
<dbReference type="InterPro" id="IPR005855">
    <property type="entry name" value="GFAT"/>
</dbReference>
<dbReference type="InterPro" id="IPR047084">
    <property type="entry name" value="GFAT_N"/>
</dbReference>
<dbReference type="InterPro" id="IPR035466">
    <property type="entry name" value="GlmS/AgaS_SIS"/>
</dbReference>
<dbReference type="InterPro" id="IPR035490">
    <property type="entry name" value="GlmS/FrlB_SIS"/>
</dbReference>
<dbReference type="InterPro" id="IPR029055">
    <property type="entry name" value="Ntn_hydrolases_N"/>
</dbReference>
<dbReference type="InterPro" id="IPR001347">
    <property type="entry name" value="SIS_dom"/>
</dbReference>
<dbReference type="InterPro" id="IPR046348">
    <property type="entry name" value="SIS_dom_sf"/>
</dbReference>
<dbReference type="NCBIfam" id="TIGR01135">
    <property type="entry name" value="glmS"/>
    <property type="match status" value="1"/>
</dbReference>
<dbReference type="NCBIfam" id="NF001484">
    <property type="entry name" value="PRK00331.1"/>
    <property type="match status" value="1"/>
</dbReference>
<dbReference type="PANTHER" id="PTHR10937">
    <property type="entry name" value="GLUCOSAMINE--FRUCTOSE-6-PHOSPHATE AMINOTRANSFERASE, ISOMERIZING"/>
    <property type="match status" value="1"/>
</dbReference>
<dbReference type="PANTHER" id="PTHR10937:SF0">
    <property type="entry name" value="GLUTAMINE--FRUCTOSE-6-PHOSPHATE TRANSAMINASE (ISOMERIZING)"/>
    <property type="match status" value="1"/>
</dbReference>
<dbReference type="Pfam" id="PF13522">
    <property type="entry name" value="GATase_6"/>
    <property type="match status" value="1"/>
</dbReference>
<dbReference type="Pfam" id="PF01380">
    <property type="entry name" value="SIS"/>
    <property type="match status" value="2"/>
</dbReference>
<dbReference type="SUPFAM" id="SSF56235">
    <property type="entry name" value="N-terminal nucleophile aminohydrolases (Ntn hydrolases)"/>
    <property type="match status" value="1"/>
</dbReference>
<dbReference type="SUPFAM" id="SSF53697">
    <property type="entry name" value="SIS domain"/>
    <property type="match status" value="1"/>
</dbReference>
<dbReference type="PROSITE" id="PS51278">
    <property type="entry name" value="GATASE_TYPE_2"/>
    <property type="match status" value="1"/>
</dbReference>
<dbReference type="PROSITE" id="PS51464">
    <property type="entry name" value="SIS"/>
    <property type="match status" value="2"/>
</dbReference>
<comment type="function">
    <text evidence="1">Catalyzes the first step in hexosamine metabolism, converting fructose-6P into glucosamine-6P using glutamine as a nitrogen source.</text>
</comment>
<comment type="catalytic activity">
    <reaction evidence="1">
        <text>D-fructose 6-phosphate + L-glutamine = D-glucosamine 6-phosphate + L-glutamate</text>
        <dbReference type="Rhea" id="RHEA:13237"/>
        <dbReference type="ChEBI" id="CHEBI:29985"/>
        <dbReference type="ChEBI" id="CHEBI:58359"/>
        <dbReference type="ChEBI" id="CHEBI:58725"/>
        <dbReference type="ChEBI" id="CHEBI:61527"/>
        <dbReference type="EC" id="2.6.1.16"/>
    </reaction>
</comment>
<comment type="subunit">
    <text evidence="1">Homodimer.</text>
</comment>
<comment type="subcellular location">
    <subcellularLocation>
        <location evidence="1">Cytoplasm</location>
    </subcellularLocation>
</comment>
<sequence>MCGIVGYVGRDLALPIVLGALERLEYRGYDSAGVALIEDGKLIVEKKKGKIRELVKALWGKDYKAKTGIGHTRWATHGKPTDENAHPHTDEKGEFAVVHNGIIENYLELKEELKKEGVKFRSETDTEVIAHLIAKNYRGDLLEAVLKTVKKLKGAFAFAVITVHEPNRLIGVKQGSPLIVGLGEGENFLASDIPAILPYTKKIIVLDDGEIADLTPDTVNIYNFEGEPVSKEVMITPWDLVSAEKGGFKHFMLKEIYEQPKAINDTLKGFLSTEDAIPFKLKDFRRVLIIACGTSYHAGFVGKYWIERFAGVPTEVIYASEFRYADVPVSDKDIVIGISQSGETADTKFALQSAKEKGAFTVGLVNVVGSAIDRESDFSLHTHAGPEIGVAATKTFTAQLTALYALSVRESEERENLIRLLEKVPSLVEQTLNTAEEVEKVAEKYMKKKNMLYLGRYLNYPIALEGALKLKEISYIHAEGYPAGEMKHGPIALIDENMPVVVIAPKDRVYEKILSNVEEVLARKGRVISVGFKGDETLKSKSESVMEIPKAEEPITPFLTVIPLQLFAYFIASKLGLDVDQPRNLAKTVTVE</sequence>
<name>GLMS_AQUAE</name>
<protein>
    <recommendedName>
        <fullName evidence="1">Glutamine--fructose-6-phosphate aminotransferase [isomerizing]</fullName>
        <ecNumber evidence="1">2.6.1.16</ecNumber>
    </recommendedName>
    <alternativeName>
        <fullName evidence="1">D-fructose-6-phosphate amidotransferase</fullName>
    </alternativeName>
    <alternativeName>
        <fullName evidence="1">GFAT</fullName>
    </alternativeName>
    <alternativeName>
        <fullName evidence="1">Glucosamine-6-phosphate synthase</fullName>
    </alternativeName>
    <alternativeName>
        <fullName evidence="1">Hexosephosphate aminotransferase</fullName>
    </alternativeName>
    <alternativeName>
        <fullName evidence="1">L-glutamine--D-fructose-6-phosphate amidotransferase</fullName>
    </alternativeName>
</protein>
<feature type="initiator methionine" description="Removed" evidence="1">
    <location>
        <position position="1"/>
    </location>
</feature>
<feature type="chain" id="PRO_0000135292" description="Glutamine--fructose-6-phosphate aminotransferase [isomerizing]">
    <location>
        <begin position="2"/>
        <end position="592"/>
    </location>
</feature>
<feature type="domain" description="Glutamine amidotransferase type-2" evidence="1">
    <location>
        <begin position="2"/>
        <end position="217"/>
    </location>
</feature>
<feature type="domain" description="SIS 1" evidence="1">
    <location>
        <begin position="277"/>
        <end position="416"/>
    </location>
</feature>
<feature type="domain" description="SIS 2" evidence="1">
    <location>
        <begin position="441"/>
        <end position="582"/>
    </location>
</feature>
<feature type="active site" description="Nucleophile; for GATase activity" evidence="1">
    <location>
        <position position="2"/>
    </location>
</feature>
<feature type="active site" description="For Fru-6P isomerization activity" evidence="1">
    <location>
        <position position="587"/>
    </location>
</feature>
<evidence type="ECO:0000255" key="1">
    <source>
        <dbReference type="HAMAP-Rule" id="MF_00164"/>
    </source>
</evidence>
<reference key="1">
    <citation type="journal article" date="1998" name="Nature">
        <title>The complete genome of the hyperthermophilic bacterium Aquifex aeolicus.</title>
        <authorList>
            <person name="Deckert G."/>
            <person name="Warren P.V."/>
            <person name="Gaasterland T."/>
            <person name="Young W.G."/>
            <person name="Lenox A.L."/>
            <person name="Graham D.E."/>
            <person name="Overbeek R."/>
            <person name="Snead M.A."/>
            <person name="Keller M."/>
            <person name="Aujay M."/>
            <person name="Huber R."/>
            <person name="Feldman R.A."/>
            <person name="Short J.M."/>
            <person name="Olsen G.J."/>
            <person name="Swanson R.V."/>
        </authorList>
    </citation>
    <scope>NUCLEOTIDE SEQUENCE [LARGE SCALE GENOMIC DNA]</scope>
    <source>
        <strain>VF5</strain>
    </source>
</reference>
<keyword id="KW-0032">Aminotransferase</keyword>
<keyword id="KW-0963">Cytoplasm</keyword>
<keyword id="KW-0315">Glutamine amidotransferase</keyword>
<keyword id="KW-1185">Reference proteome</keyword>
<keyword id="KW-0677">Repeat</keyword>
<keyword id="KW-0808">Transferase</keyword>
<proteinExistence type="inferred from homology"/>